<name>RIMO_LEPBP</name>
<accession>B0SPT9</accession>
<evidence type="ECO:0000255" key="1">
    <source>
        <dbReference type="HAMAP-Rule" id="MF_01865"/>
    </source>
</evidence>
<evidence type="ECO:0000255" key="2">
    <source>
        <dbReference type="PROSITE-ProRule" id="PRU01266"/>
    </source>
</evidence>
<sequence>MPKSLENTNETPKSFFITTLGCPKNTVDSMAMHQSLLKEGLLPAAGPEASDFHLVNTCTFIQDATKETIQTILDSIDIKKQNKQKLVVVGCFAERAGKEISDDLPEVDLHFGTGKYDKAGEILRKNFPLEFKDLTEFNEDLLERLTTSKGIENYSKPYSYVKISDGCNRGCHFCIIPNLRGKYRDTDSNDVLEQTKLAVKAGSKEICLVSQDTVFYGKDTDKLMDLVRSVAAVEGLEILRLLYLYPDKKTEKLLDLYREIPKIAPYLESPLQHVSKSVLKSMNRTGDYEFFKSLFQKARDIRPDLEIRTSFILGFPGETMEDVEEIIRFVEDVKPEKVNLFPYSPQEGTKGATMDGQLKDKEIARRVNLVREAYLGTLKTIHQNRIGKIYPCVVDEVLDDGAIVRRLQDAPEIDEVVYVETKDLKLGQFGKVRVDSFYELDMSGTWVD</sequence>
<dbReference type="EC" id="2.8.4.4" evidence="1"/>
<dbReference type="EMBL" id="CP000786">
    <property type="protein sequence ID" value="ABZ97505.1"/>
    <property type="molecule type" value="Genomic_DNA"/>
</dbReference>
<dbReference type="RefSeq" id="WP_012388385.1">
    <property type="nucleotide sequence ID" value="NC_010602.1"/>
</dbReference>
<dbReference type="SMR" id="B0SPT9"/>
<dbReference type="STRING" id="456481.LEPBI_I1396"/>
<dbReference type="KEGG" id="lbi:LEPBI_I1396"/>
<dbReference type="HOGENOM" id="CLU_018697_0_1_12"/>
<dbReference type="OrthoDB" id="9805215at2"/>
<dbReference type="BioCyc" id="LBIF456481:LEPBI_RS06845-MONOMER"/>
<dbReference type="Proteomes" id="UP000001847">
    <property type="component" value="Chromosome I"/>
</dbReference>
<dbReference type="GO" id="GO:0005829">
    <property type="term" value="C:cytosol"/>
    <property type="evidence" value="ECO:0007669"/>
    <property type="project" value="TreeGrafter"/>
</dbReference>
<dbReference type="GO" id="GO:0051539">
    <property type="term" value="F:4 iron, 4 sulfur cluster binding"/>
    <property type="evidence" value="ECO:0007669"/>
    <property type="project" value="UniProtKB-UniRule"/>
</dbReference>
<dbReference type="GO" id="GO:0035599">
    <property type="term" value="F:aspartic acid methylthiotransferase activity"/>
    <property type="evidence" value="ECO:0007669"/>
    <property type="project" value="TreeGrafter"/>
</dbReference>
<dbReference type="GO" id="GO:0046872">
    <property type="term" value="F:metal ion binding"/>
    <property type="evidence" value="ECO:0007669"/>
    <property type="project" value="UniProtKB-KW"/>
</dbReference>
<dbReference type="GO" id="GO:0103039">
    <property type="term" value="F:protein methylthiotransferase activity"/>
    <property type="evidence" value="ECO:0007669"/>
    <property type="project" value="UniProtKB-EC"/>
</dbReference>
<dbReference type="GO" id="GO:0006400">
    <property type="term" value="P:tRNA modification"/>
    <property type="evidence" value="ECO:0007669"/>
    <property type="project" value="InterPro"/>
</dbReference>
<dbReference type="CDD" id="cd01335">
    <property type="entry name" value="Radical_SAM"/>
    <property type="match status" value="1"/>
</dbReference>
<dbReference type="FunFam" id="3.80.30.20:FF:000001">
    <property type="entry name" value="tRNA-2-methylthio-N(6)-dimethylallyladenosine synthase 2"/>
    <property type="match status" value="1"/>
</dbReference>
<dbReference type="Gene3D" id="3.40.50.12160">
    <property type="entry name" value="Methylthiotransferase, N-terminal domain"/>
    <property type="match status" value="1"/>
</dbReference>
<dbReference type="Gene3D" id="2.40.50.140">
    <property type="entry name" value="Nucleic acid-binding proteins"/>
    <property type="match status" value="1"/>
</dbReference>
<dbReference type="Gene3D" id="3.80.30.20">
    <property type="entry name" value="tm_1862 like domain"/>
    <property type="match status" value="1"/>
</dbReference>
<dbReference type="HAMAP" id="MF_01865">
    <property type="entry name" value="MTTase_RimO"/>
    <property type="match status" value="1"/>
</dbReference>
<dbReference type="InterPro" id="IPR006638">
    <property type="entry name" value="Elp3/MiaA/NifB-like_rSAM"/>
</dbReference>
<dbReference type="InterPro" id="IPR005839">
    <property type="entry name" value="Methylthiotransferase"/>
</dbReference>
<dbReference type="InterPro" id="IPR013848">
    <property type="entry name" value="Methylthiotransferase_N"/>
</dbReference>
<dbReference type="InterPro" id="IPR038135">
    <property type="entry name" value="Methylthiotransferase_N_sf"/>
</dbReference>
<dbReference type="InterPro" id="IPR012340">
    <property type="entry name" value="NA-bd_OB-fold"/>
</dbReference>
<dbReference type="InterPro" id="IPR005840">
    <property type="entry name" value="Ribosomal_uS12_MeSTrfase_RimO"/>
</dbReference>
<dbReference type="InterPro" id="IPR007197">
    <property type="entry name" value="rSAM"/>
</dbReference>
<dbReference type="InterPro" id="IPR023404">
    <property type="entry name" value="rSAM_horseshoe"/>
</dbReference>
<dbReference type="InterPro" id="IPR002792">
    <property type="entry name" value="TRAM_dom"/>
</dbReference>
<dbReference type="NCBIfam" id="TIGR00089">
    <property type="entry name" value="MiaB/RimO family radical SAM methylthiotransferase"/>
    <property type="match status" value="1"/>
</dbReference>
<dbReference type="PANTHER" id="PTHR43837">
    <property type="entry name" value="RIBOSOMAL PROTEIN S12 METHYLTHIOTRANSFERASE RIMO"/>
    <property type="match status" value="1"/>
</dbReference>
<dbReference type="PANTHER" id="PTHR43837:SF1">
    <property type="entry name" value="RIBOSOMAL PROTEIN US12 METHYLTHIOTRANSFERASE RIMO"/>
    <property type="match status" value="1"/>
</dbReference>
<dbReference type="Pfam" id="PF04055">
    <property type="entry name" value="Radical_SAM"/>
    <property type="match status" value="1"/>
</dbReference>
<dbReference type="Pfam" id="PF18693">
    <property type="entry name" value="TRAM_2"/>
    <property type="match status" value="1"/>
</dbReference>
<dbReference type="Pfam" id="PF00919">
    <property type="entry name" value="UPF0004"/>
    <property type="match status" value="1"/>
</dbReference>
<dbReference type="SFLD" id="SFLDG01082">
    <property type="entry name" value="B12-binding_domain_containing"/>
    <property type="match status" value="1"/>
</dbReference>
<dbReference type="SFLD" id="SFLDG01061">
    <property type="entry name" value="methylthiotransferase"/>
    <property type="match status" value="1"/>
</dbReference>
<dbReference type="SFLD" id="SFLDS00029">
    <property type="entry name" value="Radical_SAM"/>
    <property type="match status" value="1"/>
</dbReference>
<dbReference type="SMART" id="SM00729">
    <property type="entry name" value="Elp3"/>
    <property type="match status" value="1"/>
</dbReference>
<dbReference type="SUPFAM" id="SSF102114">
    <property type="entry name" value="Radical SAM enzymes"/>
    <property type="match status" value="1"/>
</dbReference>
<dbReference type="PROSITE" id="PS51449">
    <property type="entry name" value="MTTASE_N"/>
    <property type="match status" value="1"/>
</dbReference>
<dbReference type="PROSITE" id="PS51918">
    <property type="entry name" value="RADICAL_SAM"/>
    <property type="match status" value="1"/>
</dbReference>
<keyword id="KW-0004">4Fe-4S</keyword>
<keyword id="KW-0963">Cytoplasm</keyword>
<keyword id="KW-0408">Iron</keyword>
<keyword id="KW-0411">Iron-sulfur</keyword>
<keyword id="KW-0479">Metal-binding</keyword>
<keyword id="KW-1185">Reference proteome</keyword>
<keyword id="KW-0949">S-adenosyl-L-methionine</keyword>
<keyword id="KW-0808">Transferase</keyword>
<feature type="chain" id="PRO_0000374878" description="Ribosomal protein uS12 methylthiotransferase RimO">
    <location>
        <begin position="1"/>
        <end position="448"/>
    </location>
</feature>
<feature type="domain" description="MTTase N-terminal" evidence="1">
    <location>
        <begin position="13"/>
        <end position="128"/>
    </location>
</feature>
<feature type="domain" description="Radical SAM core" evidence="2">
    <location>
        <begin position="153"/>
        <end position="382"/>
    </location>
</feature>
<feature type="domain" description="TRAM" evidence="1">
    <location>
        <begin position="383"/>
        <end position="448"/>
    </location>
</feature>
<feature type="binding site" evidence="1">
    <location>
        <position position="22"/>
    </location>
    <ligand>
        <name>[4Fe-4S] cluster</name>
        <dbReference type="ChEBI" id="CHEBI:49883"/>
        <label>1</label>
    </ligand>
</feature>
<feature type="binding site" evidence="1">
    <location>
        <position position="58"/>
    </location>
    <ligand>
        <name>[4Fe-4S] cluster</name>
        <dbReference type="ChEBI" id="CHEBI:49883"/>
        <label>1</label>
    </ligand>
</feature>
<feature type="binding site" evidence="1">
    <location>
        <position position="91"/>
    </location>
    <ligand>
        <name>[4Fe-4S] cluster</name>
        <dbReference type="ChEBI" id="CHEBI:49883"/>
        <label>1</label>
    </ligand>
</feature>
<feature type="binding site" evidence="1">
    <location>
        <position position="167"/>
    </location>
    <ligand>
        <name>[4Fe-4S] cluster</name>
        <dbReference type="ChEBI" id="CHEBI:49883"/>
        <label>2</label>
        <note>4Fe-4S-S-AdoMet</note>
    </ligand>
</feature>
<feature type="binding site" evidence="1">
    <location>
        <position position="171"/>
    </location>
    <ligand>
        <name>[4Fe-4S] cluster</name>
        <dbReference type="ChEBI" id="CHEBI:49883"/>
        <label>2</label>
        <note>4Fe-4S-S-AdoMet</note>
    </ligand>
</feature>
<feature type="binding site" evidence="1">
    <location>
        <position position="174"/>
    </location>
    <ligand>
        <name>[4Fe-4S] cluster</name>
        <dbReference type="ChEBI" id="CHEBI:49883"/>
        <label>2</label>
        <note>4Fe-4S-S-AdoMet</note>
    </ligand>
</feature>
<reference key="1">
    <citation type="journal article" date="2008" name="PLoS ONE">
        <title>Genome sequence of the saprophyte Leptospira biflexa provides insights into the evolution of Leptospira and the pathogenesis of leptospirosis.</title>
        <authorList>
            <person name="Picardeau M."/>
            <person name="Bulach D.M."/>
            <person name="Bouchier C."/>
            <person name="Zuerner R.L."/>
            <person name="Zidane N."/>
            <person name="Wilson P.J."/>
            <person name="Creno S."/>
            <person name="Kuczek E.S."/>
            <person name="Bommezzadri S."/>
            <person name="Davis J.C."/>
            <person name="McGrath A."/>
            <person name="Johnson M.J."/>
            <person name="Boursaux-Eude C."/>
            <person name="Seemann T."/>
            <person name="Rouy Z."/>
            <person name="Coppel R.L."/>
            <person name="Rood J.I."/>
            <person name="Lajus A."/>
            <person name="Davies J.K."/>
            <person name="Medigue C."/>
            <person name="Adler B."/>
        </authorList>
    </citation>
    <scope>NUCLEOTIDE SEQUENCE [LARGE SCALE GENOMIC DNA]</scope>
    <source>
        <strain>Patoc 1 / ATCC 23582 / Paris</strain>
    </source>
</reference>
<comment type="function">
    <text evidence="1">Catalyzes the methylthiolation of an aspartic acid residue of ribosomal protein uS12.</text>
</comment>
<comment type="catalytic activity">
    <reaction evidence="1">
        <text>L-aspartate(89)-[ribosomal protein uS12]-hydrogen + (sulfur carrier)-SH + AH2 + 2 S-adenosyl-L-methionine = 3-methylsulfanyl-L-aspartate(89)-[ribosomal protein uS12]-hydrogen + (sulfur carrier)-H + 5'-deoxyadenosine + L-methionine + A + S-adenosyl-L-homocysteine + 2 H(+)</text>
        <dbReference type="Rhea" id="RHEA:37087"/>
        <dbReference type="Rhea" id="RHEA-COMP:10460"/>
        <dbReference type="Rhea" id="RHEA-COMP:10461"/>
        <dbReference type="Rhea" id="RHEA-COMP:14737"/>
        <dbReference type="Rhea" id="RHEA-COMP:14739"/>
        <dbReference type="ChEBI" id="CHEBI:13193"/>
        <dbReference type="ChEBI" id="CHEBI:15378"/>
        <dbReference type="ChEBI" id="CHEBI:17319"/>
        <dbReference type="ChEBI" id="CHEBI:17499"/>
        <dbReference type="ChEBI" id="CHEBI:29917"/>
        <dbReference type="ChEBI" id="CHEBI:29961"/>
        <dbReference type="ChEBI" id="CHEBI:57844"/>
        <dbReference type="ChEBI" id="CHEBI:57856"/>
        <dbReference type="ChEBI" id="CHEBI:59789"/>
        <dbReference type="ChEBI" id="CHEBI:64428"/>
        <dbReference type="ChEBI" id="CHEBI:73599"/>
        <dbReference type="EC" id="2.8.4.4"/>
    </reaction>
</comment>
<comment type="cofactor">
    <cofactor evidence="1">
        <name>[4Fe-4S] cluster</name>
        <dbReference type="ChEBI" id="CHEBI:49883"/>
    </cofactor>
    <text evidence="1">Binds 2 [4Fe-4S] clusters. One cluster is coordinated with 3 cysteines and an exchangeable S-adenosyl-L-methionine.</text>
</comment>
<comment type="subcellular location">
    <subcellularLocation>
        <location evidence="1">Cytoplasm</location>
    </subcellularLocation>
</comment>
<comment type="similarity">
    <text evidence="1">Belongs to the methylthiotransferase family. RimO subfamily.</text>
</comment>
<protein>
    <recommendedName>
        <fullName evidence="1">Ribosomal protein uS12 methylthiotransferase RimO</fullName>
        <shortName evidence="1">uS12 MTTase</shortName>
        <shortName evidence="1">uS12 methylthiotransferase</shortName>
        <ecNumber evidence="1">2.8.4.4</ecNumber>
    </recommendedName>
    <alternativeName>
        <fullName evidence="1">Ribosomal protein uS12 (aspartate-C(3))-methylthiotransferase</fullName>
    </alternativeName>
    <alternativeName>
        <fullName evidence="1">Ribosome maturation factor RimO</fullName>
    </alternativeName>
</protein>
<gene>
    <name evidence="1" type="primary">rimO</name>
    <name type="ordered locus">LEPBI_I1396</name>
</gene>
<organism>
    <name type="scientific">Leptospira biflexa serovar Patoc (strain Patoc 1 / ATCC 23582 / Paris)</name>
    <dbReference type="NCBI Taxonomy" id="456481"/>
    <lineage>
        <taxon>Bacteria</taxon>
        <taxon>Pseudomonadati</taxon>
        <taxon>Spirochaetota</taxon>
        <taxon>Spirochaetia</taxon>
        <taxon>Leptospirales</taxon>
        <taxon>Leptospiraceae</taxon>
        <taxon>Leptospira</taxon>
    </lineage>
</organism>
<proteinExistence type="inferred from homology"/>